<evidence type="ECO:0000255" key="1">
    <source>
        <dbReference type="HAMAP-Rule" id="MF_01305"/>
    </source>
</evidence>
<evidence type="ECO:0000305" key="2"/>
<organism>
    <name type="scientific">Prochlorococcus marinus (strain MIT 9312)</name>
    <dbReference type="NCBI Taxonomy" id="74546"/>
    <lineage>
        <taxon>Bacteria</taxon>
        <taxon>Bacillati</taxon>
        <taxon>Cyanobacteriota</taxon>
        <taxon>Cyanophyceae</taxon>
        <taxon>Synechococcales</taxon>
        <taxon>Prochlorococcaceae</taxon>
        <taxon>Prochlorococcus</taxon>
    </lineage>
</organism>
<gene>
    <name evidence="1" type="primary">psbJ</name>
    <name type="ordered locus">PMT9312_0302</name>
</gene>
<comment type="function">
    <text evidence="1">One of the components of the core complex of photosystem II (PSII). PSII is a light-driven water:plastoquinone oxidoreductase that uses light energy to abstract electrons from H(2)O, generating O(2) and a proton gradient subsequently used for ATP formation. It consists of a core antenna complex that captures photons, and an electron transfer chain that converts photonic excitation into a charge separation.</text>
</comment>
<comment type="subunit">
    <text evidence="2">PSII is composed of 1 copy each of membrane proteins PsbA, PsbB, PsbC, PsbD, PsbE, PsbF, PsbH, PsbI, PsbJ, PsbK, PsbL, PsbM, PsbT, PsbX, PsbY, Psb30/Ycf12, peripheral proteins PsbO, CyanoQ (PsbQ), PsbU, PsbV and a large number of cofactors. It forms dimeric complexes.</text>
</comment>
<comment type="subcellular location">
    <subcellularLocation>
        <location evidence="1">Cellular thylakoid membrane</location>
        <topology evidence="1">Single-pass membrane protein</topology>
    </subcellularLocation>
</comment>
<comment type="similarity">
    <text evidence="1">Belongs to the PsbJ family.</text>
</comment>
<sequence length="65" mass="6946">MSKLKGPDGRIPDRLPDGRPAVAWERRWTEGTLPLWLVATAGGIAVIFVLGIFFYGSYQGVGAGG</sequence>
<dbReference type="EMBL" id="CP000111">
    <property type="protein sequence ID" value="ABB49363.1"/>
    <property type="molecule type" value="Genomic_DNA"/>
</dbReference>
<dbReference type="RefSeq" id="WP_011375864.1">
    <property type="nucleotide sequence ID" value="NC_007577.1"/>
</dbReference>
<dbReference type="SMR" id="Q31CN2"/>
<dbReference type="STRING" id="74546.PMT9312_0302"/>
<dbReference type="KEGG" id="pmi:PMT9312_0302"/>
<dbReference type="eggNOG" id="ENOG5030SSF">
    <property type="taxonomic scope" value="Bacteria"/>
</dbReference>
<dbReference type="HOGENOM" id="CLU_2829784_0_0_3"/>
<dbReference type="OrthoDB" id="466474at2"/>
<dbReference type="Proteomes" id="UP000002715">
    <property type="component" value="Chromosome"/>
</dbReference>
<dbReference type="GO" id="GO:0009539">
    <property type="term" value="C:photosystem II reaction center"/>
    <property type="evidence" value="ECO:0007669"/>
    <property type="project" value="InterPro"/>
</dbReference>
<dbReference type="GO" id="GO:0031676">
    <property type="term" value="C:plasma membrane-derived thylakoid membrane"/>
    <property type="evidence" value="ECO:0007669"/>
    <property type="project" value="UniProtKB-SubCell"/>
</dbReference>
<dbReference type="GO" id="GO:0015979">
    <property type="term" value="P:photosynthesis"/>
    <property type="evidence" value="ECO:0007669"/>
    <property type="project" value="UniProtKB-UniRule"/>
</dbReference>
<dbReference type="Gene3D" id="6.10.250.2070">
    <property type="match status" value="1"/>
</dbReference>
<dbReference type="HAMAP" id="MF_01305">
    <property type="entry name" value="PSII_PsbJ"/>
    <property type="match status" value="1"/>
</dbReference>
<dbReference type="InterPro" id="IPR002682">
    <property type="entry name" value="PSII_PsbJ"/>
</dbReference>
<dbReference type="InterPro" id="IPR037267">
    <property type="entry name" value="PSII_PsbJ_sf"/>
</dbReference>
<dbReference type="NCBIfam" id="NF002722">
    <property type="entry name" value="PRK02565.1"/>
    <property type="match status" value="1"/>
</dbReference>
<dbReference type="PANTHER" id="PTHR34812">
    <property type="entry name" value="PHOTOSYSTEM II REACTION CENTER PROTEIN J"/>
    <property type="match status" value="1"/>
</dbReference>
<dbReference type="PANTHER" id="PTHR34812:SF3">
    <property type="entry name" value="PHOTOSYSTEM II REACTION CENTER PROTEIN J"/>
    <property type="match status" value="1"/>
</dbReference>
<dbReference type="Pfam" id="PF01788">
    <property type="entry name" value="PsbJ"/>
    <property type="match status" value="1"/>
</dbReference>
<dbReference type="SUPFAM" id="SSF161021">
    <property type="entry name" value="Photosystem II reaction center protein J, PsbJ"/>
    <property type="match status" value="1"/>
</dbReference>
<proteinExistence type="inferred from homology"/>
<name>PSBJ_PROM9</name>
<feature type="chain" id="PRO_0000292229" description="Photosystem II reaction center protein J">
    <location>
        <begin position="1"/>
        <end position="65"/>
    </location>
</feature>
<feature type="transmembrane region" description="Helical" evidence="1">
    <location>
        <begin position="35"/>
        <end position="55"/>
    </location>
</feature>
<accession>Q31CN2</accession>
<keyword id="KW-0472">Membrane</keyword>
<keyword id="KW-0602">Photosynthesis</keyword>
<keyword id="KW-0604">Photosystem II</keyword>
<keyword id="KW-0674">Reaction center</keyword>
<keyword id="KW-0793">Thylakoid</keyword>
<keyword id="KW-0812">Transmembrane</keyword>
<keyword id="KW-1133">Transmembrane helix</keyword>
<protein>
    <recommendedName>
        <fullName evidence="1">Photosystem II reaction center protein J</fullName>
        <shortName evidence="1">PSII-J</shortName>
    </recommendedName>
</protein>
<reference key="1">
    <citation type="journal article" date="2006" name="Science">
        <title>Genomic islands and the ecology and evolution of Prochlorococcus.</title>
        <authorList>
            <person name="Coleman M.L."/>
            <person name="Sullivan M.B."/>
            <person name="Martiny A.C."/>
            <person name="Steglich C."/>
            <person name="Barry K."/>
            <person name="Delong E.F."/>
            <person name="Chisholm S.W."/>
        </authorList>
    </citation>
    <scope>NUCLEOTIDE SEQUENCE [LARGE SCALE GENOMIC DNA]</scope>
    <source>
        <strain>MIT 9312</strain>
    </source>
</reference>